<organism>
    <name type="scientific">Wolbachia sp. subsp. Drosophila simulans (strain wRi)</name>
    <dbReference type="NCBI Taxonomy" id="66084"/>
    <lineage>
        <taxon>Bacteria</taxon>
        <taxon>Pseudomonadati</taxon>
        <taxon>Pseudomonadota</taxon>
        <taxon>Alphaproteobacteria</taxon>
        <taxon>Rickettsiales</taxon>
        <taxon>Anaplasmataceae</taxon>
        <taxon>Wolbachieae</taxon>
        <taxon>Wolbachia</taxon>
    </lineage>
</organism>
<gene>
    <name evidence="1" type="primary">atpH</name>
    <name type="ordered locus">WRi_004930</name>
</gene>
<feature type="chain" id="PRO_1000184834" description="ATP synthase subunit delta">
    <location>
        <begin position="1"/>
        <end position="186"/>
    </location>
</feature>
<keyword id="KW-0066">ATP synthesis</keyword>
<keyword id="KW-0997">Cell inner membrane</keyword>
<keyword id="KW-1003">Cell membrane</keyword>
<keyword id="KW-0139">CF(1)</keyword>
<keyword id="KW-0375">Hydrogen ion transport</keyword>
<keyword id="KW-0406">Ion transport</keyword>
<keyword id="KW-0472">Membrane</keyword>
<keyword id="KW-0813">Transport</keyword>
<dbReference type="EMBL" id="CP001391">
    <property type="protein sequence ID" value="ACN95275.1"/>
    <property type="molecule type" value="Genomic_DNA"/>
</dbReference>
<dbReference type="RefSeq" id="WP_007550302.1">
    <property type="nucleotide sequence ID" value="NZ_MKIF01000201.1"/>
</dbReference>
<dbReference type="SMR" id="C0R2Y3"/>
<dbReference type="STRING" id="66084.WRi_004930"/>
<dbReference type="KEGG" id="wri:WRi_004930"/>
<dbReference type="HOGENOM" id="CLU_085114_4_1_5"/>
<dbReference type="Proteomes" id="UP000001293">
    <property type="component" value="Chromosome"/>
</dbReference>
<dbReference type="GO" id="GO:0005886">
    <property type="term" value="C:plasma membrane"/>
    <property type="evidence" value="ECO:0007669"/>
    <property type="project" value="UniProtKB-SubCell"/>
</dbReference>
<dbReference type="GO" id="GO:0045259">
    <property type="term" value="C:proton-transporting ATP synthase complex"/>
    <property type="evidence" value="ECO:0007669"/>
    <property type="project" value="UniProtKB-KW"/>
</dbReference>
<dbReference type="GO" id="GO:0046933">
    <property type="term" value="F:proton-transporting ATP synthase activity, rotational mechanism"/>
    <property type="evidence" value="ECO:0007669"/>
    <property type="project" value="UniProtKB-UniRule"/>
</dbReference>
<dbReference type="Gene3D" id="1.10.520.20">
    <property type="entry name" value="N-terminal domain of the delta subunit of the F1F0-ATP synthase"/>
    <property type="match status" value="1"/>
</dbReference>
<dbReference type="HAMAP" id="MF_01416">
    <property type="entry name" value="ATP_synth_delta_bact"/>
    <property type="match status" value="1"/>
</dbReference>
<dbReference type="InterPro" id="IPR026015">
    <property type="entry name" value="ATP_synth_OSCP/delta_N_sf"/>
</dbReference>
<dbReference type="InterPro" id="IPR020781">
    <property type="entry name" value="ATPase_OSCP/d_CS"/>
</dbReference>
<dbReference type="InterPro" id="IPR000711">
    <property type="entry name" value="ATPase_OSCP/dsu"/>
</dbReference>
<dbReference type="NCBIfam" id="TIGR01145">
    <property type="entry name" value="ATP_synt_delta"/>
    <property type="match status" value="1"/>
</dbReference>
<dbReference type="PANTHER" id="PTHR11910">
    <property type="entry name" value="ATP SYNTHASE DELTA CHAIN"/>
    <property type="match status" value="1"/>
</dbReference>
<dbReference type="Pfam" id="PF00213">
    <property type="entry name" value="OSCP"/>
    <property type="match status" value="1"/>
</dbReference>
<dbReference type="PRINTS" id="PR00125">
    <property type="entry name" value="ATPASEDELTA"/>
</dbReference>
<dbReference type="SUPFAM" id="SSF47928">
    <property type="entry name" value="N-terminal domain of the delta subunit of the F1F0-ATP synthase"/>
    <property type="match status" value="1"/>
</dbReference>
<dbReference type="PROSITE" id="PS00389">
    <property type="entry name" value="ATPASE_DELTA"/>
    <property type="match status" value="1"/>
</dbReference>
<reference key="1">
    <citation type="journal article" date="2009" name="Proc. Natl. Acad. Sci. U.S.A.">
        <title>The mosaic genome structure of the Wolbachia wRi strain infecting Drosophila simulans.</title>
        <authorList>
            <person name="Klasson L."/>
            <person name="Westberg J."/>
            <person name="Sapountzis P."/>
            <person name="Naeslund K."/>
            <person name="Lutnaes Y."/>
            <person name="Darby A.C."/>
            <person name="Veneti Z."/>
            <person name="Chen L."/>
            <person name="Braig H.R."/>
            <person name="Garrett R."/>
            <person name="Bourtzis K."/>
            <person name="Andersson S.G."/>
        </authorList>
    </citation>
    <scope>NUCLEOTIDE SEQUENCE [LARGE SCALE GENOMIC DNA]</scope>
    <source>
        <strain>wRi</strain>
    </source>
</reference>
<protein>
    <recommendedName>
        <fullName evidence="1">ATP synthase subunit delta</fullName>
    </recommendedName>
    <alternativeName>
        <fullName evidence="1">ATP synthase F(1) sector subunit delta</fullName>
    </alternativeName>
    <alternativeName>
        <fullName evidence="1">F-type ATPase subunit delta</fullName>
        <shortName evidence="1">F-ATPase subunit delta</shortName>
    </alternativeName>
</protein>
<sequence length="186" mass="21426">MKKTQYNNLVSSYARVLFHVSGSRLGIIREEVEFLLAFFKDQRDVFVYLSHPMISFAHKKEVMLSINEHLSENLVKFIMVIFANKRSSLLILILEKFLSLARENENEFEITIKSAETLKESDIKIITESLSFLGKIIKVSNVVDPSILGGFVVRYGFNLIDASLKSYLDRLVDLSKMEILKVRNFV</sequence>
<comment type="function">
    <text evidence="1">F(1)F(0) ATP synthase produces ATP from ADP in the presence of a proton or sodium gradient. F-type ATPases consist of two structural domains, F(1) containing the extramembraneous catalytic core and F(0) containing the membrane proton channel, linked together by a central stalk and a peripheral stalk. During catalysis, ATP synthesis in the catalytic domain of F(1) is coupled via a rotary mechanism of the central stalk subunits to proton translocation.</text>
</comment>
<comment type="function">
    <text evidence="1">This protein is part of the stalk that links CF(0) to CF(1). It either transmits conformational changes from CF(0) to CF(1) or is implicated in proton conduction.</text>
</comment>
<comment type="subunit">
    <text evidence="1">F-type ATPases have 2 components, F(1) - the catalytic core - and F(0) - the membrane proton channel. F(1) has five subunits: alpha(3), beta(3), gamma(1), delta(1), epsilon(1). F(0) has three main subunits: a(1), b(2) and c(10-14). The alpha and beta chains form an alternating ring which encloses part of the gamma chain. F(1) is attached to F(0) by a central stalk formed by the gamma and epsilon chains, while a peripheral stalk is formed by the delta and b chains.</text>
</comment>
<comment type="subcellular location">
    <subcellularLocation>
        <location evidence="1">Cell inner membrane</location>
        <topology evidence="1">Peripheral membrane protein</topology>
    </subcellularLocation>
</comment>
<comment type="similarity">
    <text evidence="1">Belongs to the ATPase delta chain family.</text>
</comment>
<evidence type="ECO:0000255" key="1">
    <source>
        <dbReference type="HAMAP-Rule" id="MF_01416"/>
    </source>
</evidence>
<name>ATPD_WOLWR</name>
<accession>C0R2Y3</accession>
<proteinExistence type="inferred from homology"/>